<name>SLX1_GIAIC</name>
<protein>
    <recommendedName>
        <fullName evidence="1">Structure-specific endonuclease subunit SLX1 homolog</fullName>
        <ecNumber evidence="1">3.1.-.-</ecNumber>
    </recommendedName>
</protein>
<organism>
    <name type="scientific">Giardia intestinalis (strain ATCC 50803 / WB clone C6)</name>
    <name type="common">Giardia lamblia</name>
    <dbReference type="NCBI Taxonomy" id="184922"/>
    <lineage>
        <taxon>Eukaryota</taxon>
        <taxon>Metamonada</taxon>
        <taxon>Diplomonadida</taxon>
        <taxon>Hexamitidae</taxon>
        <taxon>Giardiinae</taxon>
        <taxon>Giardia</taxon>
    </lineage>
</organism>
<reference key="1">
    <citation type="journal article" date="2007" name="Science">
        <title>Genomic minimalism in the early diverging intestinal parasite Giardia lamblia.</title>
        <authorList>
            <person name="Morrison H.G."/>
            <person name="McArthur A.G."/>
            <person name="Gillin F.D."/>
            <person name="Aley S.B."/>
            <person name="Adam R.D."/>
            <person name="Olsen G.J."/>
            <person name="Best A.A."/>
            <person name="Cande W.Z."/>
            <person name="Chen F."/>
            <person name="Cipriano M.J."/>
            <person name="Davids B.J."/>
            <person name="Dawson S.C."/>
            <person name="Elmendorf H.G."/>
            <person name="Hehl A.B."/>
            <person name="Holder M.E."/>
            <person name="Huse S.M."/>
            <person name="Kim U.U."/>
            <person name="Lasek-Nesselquist E."/>
            <person name="Manning G."/>
            <person name="Nigam A."/>
            <person name="Nixon J.E.J."/>
            <person name="Palm D."/>
            <person name="Passamaneck N.E."/>
            <person name="Prabhu A."/>
            <person name="Reich C.I."/>
            <person name="Reiner D.S."/>
            <person name="Samuelson J."/>
            <person name="Svard S.G."/>
            <person name="Sogin M.L."/>
        </authorList>
    </citation>
    <scope>NUCLEOTIDE SEQUENCE [LARGE SCALE GENOMIC DNA]</scope>
    <source>
        <strain>ATCC 50803 / WB clone C6</strain>
    </source>
</reference>
<feature type="chain" id="PRO_0000383762" description="Structure-specific endonuclease subunit SLX1 homolog">
    <location>
        <begin position="1"/>
        <end position="359"/>
    </location>
</feature>
<feature type="domain" description="GIY-YIG" evidence="1">
    <location>
        <begin position="9"/>
        <end position="91"/>
    </location>
</feature>
<feature type="zinc finger region" description="SLX1-type" evidence="1">
    <location>
        <begin position="192"/>
        <end position="238"/>
    </location>
</feature>
<feature type="region of interest" description="Disordered" evidence="2">
    <location>
        <begin position="256"/>
        <end position="359"/>
    </location>
</feature>
<feature type="compositionally biased region" description="Polar residues" evidence="2">
    <location>
        <begin position="269"/>
        <end position="281"/>
    </location>
</feature>
<feature type="compositionally biased region" description="Basic and acidic residues" evidence="2">
    <location>
        <begin position="295"/>
        <end position="306"/>
    </location>
</feature>
<feature type="compositionally biased region" description="Low complexity" evidence="2">
    <location>
        <begin position="316"/>
        <end position="326"/>
    </location>
</feature>
<gene>
    <name type="ORF">GL50803_16475</name>
</gene>
<dbReference type="EC" id="3.1.-.-" evidence="1"/>
<dbReference type="EMBL" id="AACB02000001">
    <property type="protein sequence ID" value="EDO82414.1"/>
    <property type="molecule type" value="Genomic_DNA"/>
</dbReference>
<dbReference type="RefSeq" id="XP_001710088.1">
    <property type="nucleotide sequence ID" value="XM_001710036.1"/>
</dbReference>
<dbReference type="SMR" id="A8B2Z8"/>
<dbReference type="STRING" id="184922.A8B2Z8"/>
<dbReference type="EnsemblProtists" id="EDO82414">
    <property type="protein sequence ID" value="EDO82414"/>
    <property type="gene ID" value="GL50803_16475"/>
</dbReference>
<dbReference type="GeneID" id="5703014"/>
<dbReference type="KEGG" id="gla:GL50803_0016475"/>
<dbReference type="VEuPathDB" id="GiardiaDB:GL50803_16475"/>
<dbReference type="HOGENOM" id="CLU_772612_0_0_1"/>
<dbReference type="OMA" id="MVCIIHG"/>
<dbReference type="GO" id="GO:0033557">
    <property type="term" value="C:Slx1-Slx4 complex"/>
    <property type="evidence" value="ECO:0007669"/>
    <property type="project" value="UniProtKB-UniRule"/>
</dbReference>
<dbReference type="GO" id="GO:0017108">
    <property type="term" value="F:5'-flap endonuclease activity"/>
    <property type="evidence" value="ECO:0007669"/>
    <property type="project" value="InterPro"/>
</dbReference>
<dbReference type="GO" id="GO:0008270">
    <property type="term" value="F:zinc ion binding"/>
    <property type="evidence" value="ECO:0007669"/>
    <property type="project" value="UniProtKB-KW"/>
</dbReference>
<dbReference type="GO" id="GO:0006310">
    <property type="term" value="P:DNA recombination"/>
    <property type="evidence" value="ECO:0007669"/>
    <property type="project" value="UniProtKB-UniRule"/>
</dbReference>
<dbReference type="GO" id="GO:0006281">
    <property type="term" value="P:DNA repair"/>
    <property type="evidence" value="ECO:0007669"/>
    <property type="project" value="UniProtKB-UniRule"/>
</dbReference>
<dbReference type="CDD" id="cd10455">
    <property type="entry name" value="GIY-YIG_SLX1"/>
    <property type="match status" value="1"/>
</dbReference>
<dbReference type="Gene3D" id="3.40.1440.10">
    <property type="entry name" value="GIY-YIG endonuclease"/>
    <property type="match status" value="1"/>
</dbReference>
<dbReference type="Gene3D" id="3.30.40.10">
    <property type="entry name" value="Zinc/RING finger domain, C3HC4 (zinc finger)"/>
    <property type="match status" value="1"/>
</dbReference>
<dbReference type="HAMAP" id="MF_03100">
    <property type="entry name" value="Endonuc_su_Slx1"/>
    <property type="match status" value="1"/>
</dbReference>
<dbReference type="InterPro" id="IPR000305">
    <property type="entry name" value="GIY-YIG_endonuc"/>
</dbReference>
<dbReference type="InterPro" id="IPR035901">
    <property type="entry name" value="GIY-YIG_endonuc_sf"/>
</dbReference>
<dbReference type="InterPro" id="IPR027520">
    <property type="entry name" value="Slx1"/>
</dbReference>
<dbReference type="InterPro" id="IPR050381">
    <property type="entry name" value="SLX1_endonuclease"/>
</dbReference>
<dbReference type="InterPro" id="IPR001841">
    <property type="entry name" value="Znf_RING"/>
</dbReference>
<dbReference type="InterPro" id="IPR013083">
    <property type="entry name" value="Znf_RING/FYVE/PHD"/>
</dbReference>
<dbReference type="PANTHER" id="PTHR20208">
    <property type="entry name" value="STRUCTURE-SPECIFIC ENDONUCLEASE SUBUNIT SLX1"/>
    <property type="match status" value="1"/>
</dbReference>
<dbReference type="PANTHER" id="PTHR20208:SF10">
    <property type="entry name" value="STRUCTURE-SPECIFIC ENDONUCLEASE SUBUNIT SLX1"/>
    <property type="match status" value="1"/>
</dbReference>
<dbReference type="Pfam" id="PF01541">
    <property type="entry name" value="GIY-YIG"/>
    <property type="match status" value="1"/>
</dbReference>
<dbReference type="SUPFAM" id="SSF82771">
    <property type="entry name" value="GIY-YIG endonuclease"/>
    <property type="match status" value="1"/>
</dbReference>
<dbReference type="SUPFAM" id="SSF57850">
    <property type="entry name" value="RING/U-box"/>
    <property type="match status" value="1"/>
</dbReference>
<dbReference type="PROSITE" id="PS50164">
    <property type="entry name" value="GIY_YIG"/>
    <property type="match status" value="1"/>
</dbReference>
<keyword id="KW-0227">DNA damage</keyword>
<keyword id="KW-0233">DNA recombination</keyword>
<keyword id="KW-0234">DNA repair</keyword>
<keyword id="KW-0255">Endonuclease</keyword>
<keyword id="KW-0378">Hydrolase</keyword>
<keyword id="KW-0479">Metal-binding</keyword>
<keyword id="KW-0540">Nuclease</keyword>
<keyword id="KW-0539">Nucleus</keyword>
<keyword id="KW-0862">Zinc</keyword>
<keyword id="KW-0863">Zinc-finger</keyword>
<accession>A8B2Z8</accession>
<sequence>MTIFSGPRGLFACYCLVAESSESPKRCYIGFTNNPLRRIRQHNRKIAGGARKTSRYGPWRMVLFVGGFSTKVSALKFEYIWTYPTRSRYVNCISATSQKLRLACPRSISTALDVLVTLLIHPPFSLQPLYVVLLDAEGNRVKSQLEQHSVPVFVSTMEALQIEPGVRAPSDIIYAQCTSSNGTTDTTFTDVCPICQDGVSPSNVQCMQCSARFCITCAGKLFTRRNTLIPCFGKCPICKREFQWKEMLRKRAEELVAGRKSVPHKTQAVDGQSSLSQNSSYDDYDTISLLSSSSEPEKDDISRDESGTVASVQPVSSVALSDSSRSPATTSPTKPLAIDPLLSSPRPCALPSDVISITD</sequence>
<proteinExistence type="inferred from homology"/>
<comment type="function">
    <text evidence="1">Catalytic subunit of a heterodimeric structure-specific endonuclease that resolves DNA secondary structures generated during DNA repair and recombination. Has endonuclease activity towards branched DNA substrates, introducing single-strand cuts in duplex DNA close to junctions with ss-DNA.</text>
</comment>
<comment type="cofactor">
    <cofactor evidence="1">
        <name>a divalent metal cation</name>
        <dbReference type="ChEBI" id="CHEBI:60240"/>
    </cofactor>
</comment>
<comment type="subunit">
    <text evidence="1">Forms a heterodimer with a member of the SLX4 family.</text>
</comment>
<comment type="subcellular location">
    <subcellularLocation>
        <location evidence="1">Nucleus</location>
    </subcellularLocation>
</comment>
<comment type="similarity">
    <text evidence="1">Belongs to the SLX1 family.</text>
</comment>
<evidence type="ECO:0000255" key="1">
    <source>
        <dbReference type="HAMAP-Rule" id="MF_03100"/>
    </source>
</evidence>
<evidence type="ECO:0000256" key="2">
    <source>
        <dbReference type="SAM" id="MobiDB-lite"/>
    </source>
</evidence>